<gene>
    <name type="primary">PDC1</name>
    <name type="ordered locus">KLLA0E16357g</name>
</gene>
<organism>
    <name type="scientific">Kluyveromyces lactis (strain ATCC 8585 / CBS 2359 / DSM 70799 / NBRC 1267 / NRRL Y-1140 / WM37)</name>
    <name type="common">Yeast</name>
    <name type="synonym">Candida sphaerica</name>
    <dbReference type="NCBI Taxonomy" id="284590"/>
    <lineage>
        <taxon>Eukaryota</taxon>
        <taxon>Fungi</taxon>
        <taxon>Dikarya</taxon>
        <taxon>Ascomycota</taxon>
        <taxon>Saccharomycotina</taxon>
        <taxon>Saccharomycetes</taxon>
        <taxon>Saccharomycetales</taxon>
        <taxon>Saccharomycetaceae</taxon>
        <taxon>Kluyveromyces</taxon>
    </lineage>
</organism>
<accession>Q12629</accession>
<accession>Q6CN05</accession>
<name>PDC1_KLULA</name>
<comment type="catalytic activity">
    <reaction>
        <text>a 2-oxocarboxylate + H(+) = an aldehyde + CO2</text>
        <dbReference type="Rhea" id="RHEA:11628"/>
        <dbReference type="ChEBI" id="CHEBI:15378"/>
        <dbReference type="ChEBI" id="CHEBI:16526"/>
        <dbReference type="ChEBI" id="CHEBI:17478"/>
        <dbReference type="ChEBI" id="CHEBI:35179"/>
        <dbReference type="EC" id="4.1.1.1"/>
    </reaction>
</comment>
<comment type="catalytic activity">
    <reaction evidence="2">
        <text>pyruvate + H(+) = acetaldehyde + CO2</text>
        <dbReference type="Rhea" id="RHEA:45484"/>
        <dbReference type="ChEBI" id="CHEBI:15343"/>
        <dbReference type="ChEBI" id="CHEBI:15361"/>
        <dbReference type="ChEBI" id="CHEBI:15378"/>
        <dbReference type="ChEBI" id="CHEBI:16526"/>
    </reaction>
</comment>
<comment type="cofactor">
    <cofactor evidence="2">
        <name>Mg(2+)</name>
        <dbReference type="ChEBI" id="CHEBI:18420"/>
    </cofactor>
    <text evidence="2">Binds 1 Mg(2+) per subunit.</text>
</comment>
<comment type="cofactor">
    <cofactor evidence="2">
        <name>thiamine diphosphate</name>
        <dbReference type="ChEBI" id="CHEBI:58937"/>
    </cofactor>
    <text evidence="2">Binds 1 thiamine pyrophosphate per subunit.</text>
</comment>
<comment type="subunit">
    <text evidence="1">Homotetramer.</text>
</comment>
<comment type="similarity">
    <text evidence="3">Belongs to the TPP enzyme family.</text>
</comment>
<protein>
    <recommendedName>
        <fullName>Pyruvate decarboxylase</fullName>
        <ecNumber>4.1.1.1</ecNumber>
    </recommendedName>
</protein>
<reference key="1">
    <citation type="journal article" date="1996" name="Mol. Microbiol.">
        <title>The 'petite-negative' yeast Kluyveromyces lactis has a single gene expressing pyruvate decarboxylase activity.</title>
        <authorList>
            <person name="Bianchi M.M."/>
            <person name="Tizzani L."/>
            <person name="Destruelle M."/>
            <person name="Frontall L."/>
            <person name="Wesolowski-Louvel M."/>
        </authorList>
    </citation>
    <scope>NUCLEOTIDE SEQUENCE [GENOMIC DNA]</scope>
    <source>
        <strain>ATCC 76492 / CBS 2359/152 / CLIB 210</strain>
    </source>
</reference>
<reference key="2">
    <citation type="journal article" date="2004" name="Nature">
        <title>Genome evolution in yeasts.</title>
        <authorList>
            <person name="Dujon B."/>
            <person name="Sherman D."/>
            <person name="Fischer G."/>
            <person name="Durrens P."/>
            <person name="Casaregola S."/>
            <person name="Lafontaine I."/>
            <person name="de Montigny J."/>
            <person name="Marck C."/>
            <person name="Neuveglise C."/>
            <person name="Talla E."/>
            <person name="Goffard N."/>
            <person name="Frangeul L."/>
            <person name="Aigle M."/>
            <person name="Anthouard V."/>
            <person name="Babour A."/>
            <person name="Barbe V."/>
            <person name="Barnay S."/>
            <person name="Blanchin S."/>
            <person name="Beckerich J.-M."/>
            <person name="Beyne E."/>
            <person name="Bleykasten C."/>
            <person name="Boisrame A."/>
            <person name="Boyer J."/>
            <person name="Cattolico L."/>
            <person name="Confanioleri F."/>
            <person name="de Daruvar A."/>
            <person name="Despons L."/>
            <person name="Fabre E."/>
            <person name="Fairhead C."/>
            <person name="Ferry-Dumazet H."/>
            <person name="Groppi A."/>
            <person name="Hantraye F."/>
            <person name="Hennequin C."/>
            <person name="Jauniaux N."/>
            <person name="Joyet P."/>
            <person name="Kachouri R."/>
            <person name="Kerrest A."/>
            <person name="Koszul R."/>
            <person name="Lemaire M."/>
            <person name="Lesur I."/>
            <person name="Ma L."/>
            <person name="Muller H."/>
            <person name="Nicaud J.-M."/>
            <person name="Nikolski M."/>
            <person name="Oztas S."/>
            <person name="Ozier-Kalogeropoulos O."/>
            <person name="Pellenz S."/>
            <person name="Potier S."/>
            <person name="Richard G.-F."/>
            <person name="Straub M.-L."/>
            <person name="Suleau A."/>
            <person name="Swennen D."/>
            <person name="Tekaia F."/>
            <person name="Wesolowski-Louvel M."/>
            <person name="Westhof E."/>
            <person name="Wirth B."/>
            <person name="Zeniou-Meyer M."/>
            <person name="Zivanovic Y."/>
            <person name="Bolotin-Fukuhara M."/>
            <person name="Thierry A."/>
            <person name="Bouchier C."/>
            <person name="Caudron B."/>
            <person name="Scarpelli C."/>
            <person name="Gaillardin C."/>
            <person name="Weissenbach J."/>
            <person name="Wincker P."/>
            <person name="Souciet J.-L."/>
        </authorList>
    </citation>
    <scope>NUCLEOTIDE SEQUENCE [LARGE SCALE GENOMIC DNA]</scope>
    <source>
        <strain>ATCC 8585 / CBS 2359 / DSM 70799 / NBRC 1267 / NRRL Y-1140 / WM37</strain>
    </source>
</reference>
<feature type="chain" id="PRO_0000090765" description="Pyruvate decarboxylase">
    <location>
        <begin position="1"/>
        <end position="563"/>
    </location>
</feature>
<feature type="binding site" evidence="2">
    <location>
        <position position="28"/>
    </location>
    <ligand>
        <name>pyruvate</name>
        <dbReference type="ChEBI" id="CHEBI:15361"/>
        <note>ligand shared between two neighboring subunits</note>
    </ligand>
</feature>
<feature type="binding site" evidence="2">
    <location>
        <position position="115"/>
    </location>
    <ligand>
        <name>pyruvate</name>
        <dbReference type="ChEBI" id="CHEBI:15361"/>
        <note>ligand shared between two neighboring subunits</note>
    </ligand>
</feature>
<feature type="binding site" evidence="2">
    <location>
        <position position="390"/>
    </location>
    <ligand>
        <name>thiamine diphosphate</name>
        <dbReference type="ChEBI" id="CHEBI:58937"/>
    </ligand>
</feature>
<feature type="binding site" evidence="2">
    <location>
        <begin position="413"/>
        <end position="415"/>
    </location>
    <ligand>
        <name>thiamine diphosphate</name>
        <dbReference type="ChEBI" id="CHEBI:58937"/>
    </ligand>
</feature>
<feature type="binding site" evidence="2">
    <location>
        <position position="444"/>
    </location>
    <ligand>
        <name>Mg(2+)</name>
        <dbReference type="ChEBI" id="CHEBI:18420"/>
    </ligand>
</feature>
<feature type="binding site" evidence="2">
    <location>
        <begin position="445"/>
        <end position="446"/>
    </location>
    <ligand>
        <name>thiamine diphosphate</name>
        <dbReference type="ChEBI" id="CHEBI:58937"/>
    </ligand>
</feature>
<feature type="binding site" evidence="2">
    <location>
        <begin position="471"/>
        <end position="476"/>
    </location>
    <ligand>
        <name>thiamine diphosphate</name>
        <dbReference type="ChEBI" id="CHEBI:58937"/>
    </ligand>
</feature>
<feature type="binding site" evidence="2">
    <location>
        <position position="471"/>
    </location>
    <ligand>
        <name>Mg(2+)</name>
        <dbReference type="ChEBI" id="CHEBI:18420"/>
    </ligand>
</feature>
<feature type="binding site" evidence="2">
    <location>
        <position position="473"/>
    </location>
    <ligand>
        <name>Mg(2+)</name>
        <dbReference type="ChEBI" id="CHEBI:18420"/>
    </ligand>
</feature>
<feature type="binding site" evidence="2">
    <location>
        <position position="477"/>
    </location>
    <ligand>
        <name>pyruvate</name>
        <dbReference type="ChEBI" id="CHEBI:15361"/>
        <note>ligand shared between two neighboring subunits</note>
    </ligand>
</feature>
<feature type="sequence conflict" description="In Ref. 1; CAA59953." evidence="3" ref="1">
    <original>S</original>
    <variation>C</variation>
    <location>
        <position position="129"/>
    </location>
</feature>
<feature type="sequence conflict" description="In Ref. 1; CAA59953." evidence="3" ref="1">
    <original>D</original>
    <variation>H</variation>
    <location>
        <position position="280"/>
    </location>
</feature>
<feature type="sequence conflict" description="In Ref. 1; CAA59953." evidence="3" ref="1">
    <original>SA</original>
    <variation>RP</variation>
    <location>
        <begin position="318"/>
        <end position="319"/>
    </location>
</feature>
<feature type="sequence conflict" description="In Ref. 1; CAA59953." evidence="3" ref="1">
    <original>A</original>
    <variation>D</variation>
    <location>
        <position position="358"/>
    </location>
</feature>
<feature type="sequence conflict" description="In Ref. 1; CAA59953." evidence="3" ref="1">
    <original>T</original>
    <variation>S</variation>
    <location>
        <position position="559"/>
    </location>
</feature>
<feature type="strand" evidence="5">
    <location>
        <begin position="3"/>
        <end position="5"/>
    </location>
</feature>
<feature type="helix" evidence="5">
    <location>
        <begin position="6"/>
        <end position="16"/>
    </location>
</feature>
<feature type="strand" evidence="5">
    <location>
        <begin position="21"/>
        <end position="24"/>
    </location>
</feature>
<feature type="turn" evidence="5">
    <location>
        <begin position="28"/>
        <end position="30"/>
    </location>
</feature>
<feature type="helix" evidence="5">
    <location>
        <begin position="31"/>
        <end position="35"/>
    </location>
</feature>
<feature type="helix" evidence="5">
    <location>
        <begin position="36"/>
        <end position="39"/>
    </location>
</feature>
<feature type="helix" evidence="5">
    <location>
        <begin position="51"/>
        <end position="65"/>
    </location>
</feature>
<feature type="strand" evidence="5">
    <location>
        <begin position="68"/>
        <end position="73"/>
    </location>
</feature>
<feature type="helix" evidence="5">
    <location>
        <begin position="76"/>
        <end position="80"/>
    </location>
</feature>
<feature type="helix" evidence="5">
    <location>
        <begin position="82"/>
        <end position="90"/>
    </location>
</feature>
<feature type="strand" evidence="5">
    <location>
        <begin position="95"/>
        <end position="101"/>
    </location>
</feature>
<feature type="helix" evidence="4">
    <location>
        <begin position="104"/>
        <end position="108"/>
    </location>
</feature>
<feature type="helix" evidence="5">
    <location>
        <begin position="109"/>
        <end position="114"/>
    </location>
</feature>
<feature type="strand" evidence="6">
    <location>
        <begin position="118"/>
        <end position="120"/>
    </location>
</feature>
<feature type="helix" evidence="5">
    <location>
        <begin position="124"/>
        <end position="130"/>
    </location>
</feature>
<feature type="strand" evidence="5">
    <location>
        <begin position="134"/>
        <end position="138"/>
    </location>
</feature>
<feature type="turn" evidence="5">
    <location>
        <begin position="142"/>
        <end position="144"/>
    </location>
</feature>
<feature type="helix" evidence="5">
    <location>
        <begin position="145"/>
        <end position="159"/>
    </location>
</feature>
<feature type="strand" evidence="5">
    <location>
        <begin position="163"/>
        <end position="168"/>
    </location>
</feature>
<feature type="helix" evidence="5">
    <location>
        <begin position="169"/>
        <end position="172"/>
    </location>
</feature>
<feature type="strand" evidence="5">
    <location>
        <begin position="174"/>
        <end position="177"/>
    </location>
</feature>
<feature type="helix" evidence="5">
    <location>
        <begin position="178"/>
        <end position="182"/>
    </location>
</feature>
<feature type="helix" evidence="5">
    <location>
        <begin position="194"/>
        <end position="210"/>
    </location>
</feature>
<feature type="strand" evidence="5">
    <location>
        <begin position="212"/>
        <end position="218"/>
    </location>
</feature>
<feature type="turn" evidence="5">
    <location>
        <begin position="220"/>
        <end position="226"/>
    </location>
</feature>
<feature type="helix" evidence="5">
    <location>
        <begin position="228"/>
        <end position="238"/>
    </location>
</feature>
<feature type="strand" evidence="5">
    <location>
        <begin position="242"/>
        <end position="244"/>
    </location>
</feature>
<feature type="turn" evidence="5">
    <location>
        <begin position="246"/>
        <end position="250"/>
    </location>
</feature>
<feature type="strand" evidence="5">
    <location>
        <begin position="259"/>
        <end position="262"/>
    </location>
</feature>
<feature type="helix" evidence="5">
    <location>
        <begin position="265"/>
        <end position="267"/>
    </location>
</feature>
<feature type="helix" evidence="5">
    <location>
        <begin position="270"/>
        <end position="277"/>
    </location>
</feature>
<feature type="strand" evidence="5">
    <location>
        <begin position="280"/>
        <end position="286"/>
    </location>
</feature>
<feature type="turn" evidence="4">
    <location>
        <begin position="291"/>
        <end position="297"/>
    </location>
</feature>
<feature type="strand" evidence="5">
    <location>
        <begin position="306"/>
        <end position="309"/>
    </location>
</feature>
<feature type="strand" evidence="5">
    <location>
        <begin position="311"/>
        <end position="316"/>
    </location>
</feature>
<feature type="strand" evidence="5">
    <location>
        <begin position="319"/>
        <end position="322"/>
    </location>
</feature>
<feature type="helix" evidence="5">
    <location>
        <begin position="326"/>
        <end position="340"/>
    </location>
</feature>
<feature type="turn" evidence="5">
    <location>
        <begin position="341"/>
        <end position="343"/>
    </location>
</feature>
<feature type="helix" evidence="5">
    <location>
        <begin position="367"/>
        <end position="377"/>
    </location>
</feature>
<feature type="strand" evidence="5">
    <location>
        <begin position="383"/>
        <end position="386"/>
    </location>
</feature>
<feature type="helix" evidence="5">
    <location>
        <begin position="390"/>
        <end position="394"/>
    </location>
</feature>
<feature type="helix" evidence="5">
    <location>
        <begin position="395"/>
        <end position="397"/>
    </location>
</feature>
<feature type="strand" evidence="5">
    <location>
        <begin position="405"/>
        <end position="407"/>
    </location>
</feature>
<feature type="turn" evidence="5">
    <location>
        <begin position="410"/>
        <end position="412"/>
    </location>
</feature>
<feature type="helix" evidence="5">
    <location>
        <begin position="417"/>
        <end position="432"/>
    </location>
</feature>
<feature type="strand" evidence="5">
    <location>
        <begin position="438"/>
        <end position="443"/>
    </location>
</feature>
<feature type="helix" evidence="5">
    <location>
        <begin position="444"/>
        <end position="450"/>
    </location>
</feature>
<feature type="helix" evidence="5">
    <location>
        <begin position="453"/>
        <end position="459"/>
    </location>
</feature>
<feature type="strand" evidence="5">
    <location>
        <begin position="465"/>
        <end position="473"/>
    </location>
</feature>
<feature type="helix" evidence="5">
    <location>
        <begin position="475"/>
        <end position="480"/>
    </location>
</feature>
<feature type="helix" evidence="5">
    <location>
        <begin position="486"/>
        <end position="488"/>
    </location>
</feature>
<feature type="helix" evidence="5">
    <location>
        <begin position="495"/>
        <end position="497"/>
    </location>
</feature>
<feature type="helix" evidence="5">
    <location>
        <begin position="498"/>
        <end position="501"/>
    </location>
</feature>
<feature type="strand" evidence="5">
    <location>
        <begin position="505"/>
        <end position="512"/>
    </location>
</feature>
<feature type="helix" evidence="5">
    <location>
        <begin position="515"/>
        <end position="522"/>
    </location>
</feature>
<feature type="helix" evidence="5">
    <location>
        <begin position="525"/>
        <end position="528"/>
    </location>
</feature>
<feature type="strand" evidence="5">
    <location>
        <begin position="532"/>
        <end position="539"/>
    </location>
</feature>
<feature type="helix" evidence="5">
    <location>
        <begin position="547"/>
        <end position="558"/>
    </location>
</feature>
<dbReference type="EC" id="4.1.1.1"/>
<dbReference type="EMBL" id="X85968">
    <property type="protein sequence ID" value="CAA59953.1"/>
    <property type="molecule type" value="Genomic_DNA"/>
</dbReference>
<dbReference type="EMBL" id="CR382125">
    <property type="protein sequence ID" value="CAG99771.1"/>
    <property type="molecule type" value="Genomic_DNA"/>
</dbReference>
<dbReference type="PIR" id="S70684">
    <property type="entry name" value="S70684"/>
</dbReference>
<dbReference type="RefSeq" id="XP_454684.1">
    <property type="nucleotide sequence ID" value="XM_454684.1"/>
</dbReference>
<dbReference type="PDB" id="2VJY">
    <property type="method" value="X-ray"/>
    <property type="resolution" value="2.30 A"/>
    <property type="chains" value="A/B/C/D=1-563"/>
</dbReference>
<dbReference type="PDB" id="2VK4">
    <property type="method" value="X-ray"/>
    <property type="resolution" value="1.95 A"/>
    <property type="chains" value="A/B/C/D=1-563"/>
</dbReference>
<dbReference type="PDB" id="6EFG">
    <property type="method" value="X-ray"/>
    <property type="resolution" value="2.04 A"/>
    <property type="chains" value="A/B/D/E=1-563"/>
</dbReference>
<dbReference type="PDB" id="6EFH">
    <property type="method" value="X-ray"/>
    <property type="resolution" value="2.99 A"/>
    <property type="chains" value="A/B=1-563"/>
</dbReference>
<dbReference type="PDBsum" id="2VJY"/>
<dbReference type="PDBsum" id="2VK4"/>
<dbReference type="PDBsum" id="6EFG"/>
<dbReference type="PDBsum" id="6EFH"/>
<dbReference type="SMR" id="Q12629"/>
<dbReference type="FunCoup" id="Q12629">
    <property type="interactions" value="1073"/>
</dbReference>
<dbReference type="STRING" id="284590.Q12629"/>
<dbReference type="MoonProt" id="Q12629"/>
<dbReference type="PaxDb" id="284590-Q12629"/>
<dbReference type="KEGG" id="kla:KLLA0_E16303g"/>
<dbReference type="eggNOG" id="KOG1184">
    <property type="taxonomic scope" value="Eukaryota"/>
</dbReference>
<dbReference type="HOGENOM" id="CLU_013748_0_2_1"/>
<dbReference type="InParanoid" id="Q12629"/>
<dbReference type="OMA" id="IHGPEQR"/>
<dbReference type="BRENDA" id="4.1.1.1">
    <property type="organism ID" value="2825"/>
</dbReference>
<dbReference type="EvolutionaryTrace" id="Q12629"/>
<dbReference type="Proteomes" id="UP000000598">
    <property type="component" value="Chromosome E"/>
</dbReference>
<dbReference type="GO" id="GO:0005829">
    <property type="term" value="C:cytosol"/>
    <property type="evidence" value="ECO:0007669"/>
    <property type="project" value="TreeGrafter"/>
</dbReference>
<dbReference type="GO" id="GO:0005634">
    <property type="term" value="C:nucleus"/>
    <property type="evidence" value="ECO:0007669"/>
    <property type="project" value="TreeGrafter"/>
</dbReference>
<dbReference type="GO" id="GO:0000287">
    <property type="term" value="F:magnesium ion binding"/>
    <property type="evidence" value="ECO:0007669"/>
    <property type="project" value="InterPro"/>
</dbReference>
<dbReference type="GO" id="GO:0004737">
    <property type="term" value="F:pyruvate decarboxylase activity"/>
    <property type="evidence" value="ECO:0007669"/>
    <property type="project" value="UniProtKB-EC"/>
</dbReference>
<dbReference type="GO" id="GO:0030976">
    <property type="term" value="F:thiamine pyrophosphate binding"/>
    <property type="evidence" value="ECO:0007669"/>
    <property type="project" value="InterPro"/>
</dbReference>
<dbReference type="GO" id="GO:0000949">
    <property type="term" value="P:aromatic amino acid family catabolic process to alcohol via Ehrlich pathway"/>
    <property type="evidence" value="ECO:0007669"/>
    <property type="project" value="TreeGrafter"/>
</dbReference>
<dbReference type="CDD" id="cd02005">
    <property type="entry name" value="TPP_PDC_IPDC"/>
    <property type="match status" value="1"/>
</dbReference>
<dbReference type="CDD" id="cd07038">
    <property type="entry name" value="TPP_PYR_PDC_IPDC_like"/>
    <property type="match status" value="1"/>
</dbReference>
<dbReference type="FunFam" id="3.40.50.1220:FF:000018">
    <property type="entry name" value="Pyruvate decarboxylase isozyme"/>
    <property type="match status" value="1"/>
</dbReference>
<dbReference type="FunFam" id="3.40.50.970:FF:000019">
    <property type="entry name" value="Pyruvate decarboxylase isozyme"/>
    <property type="match status" value="1"/>
</dbReference>
<dbReference type="FunFam" id="3.40.50.970:FF:000024">
    <property type="entry name" value="Pyruvate decarboxylase isozyme"/>
    <property type="match status" value="1"/>
</dbReference>
<dbReference type="Gene3D" id="3.40.50.970">
    <property type="match status" value="2"/>
</dbReference>
<dbReference type="Gene3D" id="3.40.50.1220">
    <property type="entry name" value="TPP-binding domain"/>
    <property type="match status" value="1"/>
</dbReference>
<dbReference type="InterPro" id="IPR029035">
    <property type="entry name" value="DHS-like_NAD/FAD-binding_dom"/>
</dbReference>
<dbReference type="InterPro" id="IPR012110">
    <property type="entry name" value="PDC/IPDC-like"/>
</dbReference>
<dbReference type="InterPro" id="IPR029061">
    <property type="entry name" value="THDP-binding"/>
</dbReference>
<dbReference type="InterPro" id="IPR012000">
    <property type="entry name" value="Thiamin_PyroP_enz_cen_dom"/>
</dbReference>
<dbReference type="InterPro" id="IPR012001">
    <property type="entry name" value="Thiamin_PyroP_enz_TPP-bd_dom"/>
</dbReference>
<dbReference type="InterPro" id="IPR000399">
    <property type="entry name" value="TPP-bd_CS"/>
</dbReference>
<dbReference type="InterPro" id="IPR011766">
    <property type="entry name" value="TPP_enzyme_TPP-bd"/>
</dbReference>
<dbReference type="InterPro" id="IPR047214">
    <property type="entry name" value="TPP_PDC_IPDC"/>
</dbReference>
<dbReference type="InterPro" id="IPR047213">
    <property type="entry name" value="TPP_PYR_PDC_IPDC-like"/>
</dbReference>
<dbReference type="PANTHER" id="PTHR43452">
    <property type="entry name" value="PYRUVATE DECARBOXYLASE"/>
    <property type="match status" value="1"/>
</dbReference>
<dbReference type="PANTHER" id="PTHR43452:SF30">
    <property type="entry name" value="PYRUVATE DECARBOXYLASE ISOZYME 1-RELATED"/>
    <property type="match status" value="1"/>
</dbReference>
<dbReference type="Pfam" id="PF02775">
    <property type="entry name" value="TPP_enzyme_C"/>
    <property type="match status" value="1"/>
</dbReference>
<dbReference type="Pfam" id="PF00205">
    <property type="entry name" value="TPP_enzyme_M"/>
    <property type="match status" value="1"/>
</dbReference>
<dbReference type="Pfam" id="PF02776">
    <property type="entry name" value="TPP_enzyme_N"/>
    <property type="match status" value="1"/>
</dbReference>
<dbReference type="PIRSF" id="PIRSF036565">
    <property type="entry name" value="Pyruvt_ip_decrb"/>
    <property type="match status" value="1"/>
</dbReference>
<dbReference type="SUPFAM" id="SSF52467">
    <property type="entry name" value="DHS-like NAD/FAD-binding domain"/>
    <property type="match status" value="1"/>
</dbReference>
<dbReference type="SUPFAM" id="SSF52518">
    <property type="entry name" value="Thiamin diphosphate-binding fold (THDP-binding)"/>
    <property type="match status" value="2"/>
</dbReference>
<dbReference type="PROSITE" id="PS00187">
    <property type="entry name" value="TPP_ENZYMES"/>
    <property type="match status" value="1"/>
</dbReference>
<sequence>MSEITLGRYLFERLKQVEVQTIFGLPGDFNLSLLDNIYEVPGMRWAGNANELNAAYAADGYARLKGMSCIITTFGVGELSALNGIAGSYAEHVGVLHVVGVPSVSSQAKQLLLHHTLGNGDFTVFHRMSSNISETTAMITDINTAPAEIDRCIRTTYVSQRPVYLGLPANLVDLTVPASLLDTPIDLSLKPNDPEAEEEVIENVLQLIKEAKNPVILADACCSRHDAKAETKKLIDLTQFPAFVTPMGKGSIDEKHPRFGGVYVGTLSSPAVKEAVESADLVLSVGALLSDFNTGSFSYSYKTKNIVEFHSDYTKIRSATFPGVQMKFALQKLLTKVADAAKGYKPVPVPSEPEHNEAVADSTPLKQEWVWTQVGEFLREGDVVITETGTSAFGINQTHFPNNTYGISQVLWGSIGFTTGATLGAAFAAEEIDPKKRVILFIGDGSLQLTVQEISTMIRWGLKPYLFVLNNDGYTIERLIHGETAQYNCIQNWQHLELLPTFGAKDYEAVRVSTTGEWNKLTTDEKFQDNTRIRLIEVMLPTMDAPSNLVKQAQLTAATNAKN</sequence>
<keyword id="KW-0002">3D-structure</keyword>
<keyword id="KW-0210">Decarboxylase</keyword>
<keyword id="KW-0456">Lyase</keyword>
<keyword id="KW-0460">Magnesium</keyword>
<keyword id="KW-0479">Metal-binding</keyword>
<keyword id="KW-1185">Reference proteome</keyword>
<keyword id="KW-0786">Thiamine pyrophosphate</keyword>
<proteinExistence type="evidence at protein level"/>
<evidence type="ECO:0000250" key="1"/>
<evidence type="ECO:0000250" key="2">
    <source>
        <dbReference type="UniProtKB" id="P06169"/>
    </source>
</evidence>
<evidence type="ECO:0000305" key="3"/>
<evidence type="ECO:0007829" key="4">
    <source>
        <dbReference type="PDB" id="2VJY"/>
    </source>
</evidence>
<evidence type="ECO:0007829" key="5">
    <source>
        <dbReference type="PDB" id="2VK4"/>
    </source>
</evidence>
<evidence type="ECO:0007829" key="6">
    <source>
        <dbReference type="PDB" id="6EFG"/>
    </source>
</evidence>